<dbReference type="GO" id="GO:0005576">
    <property type="term" value="C:extracellular region"/>
    <property type="evidence" value="ECO:0007669"/>
    <property type="project" value="UniProtKB-SubCell"/>
</dbReference>
<dbReference type="GO" id="GO:0005179">
    <property type="term" value="F:hormone activity"/>
    <property type="evidence" value="ECO:0007669"/>
    <property type="project" value="UniProtKB-KW"/>
</dbReference>
<dbReference type="GO" id="GO:0007629">
    <property type="term" value="P:flight behavior"/>
    <property type="evidence" value="ECO:0007669"/>
    <property type="project" value="UniProtKB-KW"/>
</dbReference>
<dbReference type="GO" id="GO:0007218">
    <property type="term" value="P:neuropeptide signaling pathway"/>
    <property type="evidence" value="ECO:0007669"/>
    <property type="project" value="UniProtKB-KW"/>
</dbReference>
<dbReference type="InterPro" id="IPR002047">
    <property type="entry name" value="Adipokinetic_hormone_CS"/>
</dbReference>
<dbReference type="PROSITE" id="PS00256">
    <property type="entry name" value="AKH"/>
    <property type="match status" value="1"/>
</dbReference>
<keyword id="KW-0027">Amidation</keyword>
<keyword id="KW-0903">Direct protein sequencing</keyword>
<keyword id="KW-0286">Flight</keyword>
<keyword id="KW-0372">Hormone</keyword>
<keyword id="KW-0527">Neuropeptide</keyword>
<keyword id="KW-0873">Pyrrolidone carboxylic acid</keyword>
<keyword id="KW-0964">Secreted</keyword>
<feature type="peptide" id="PRO_0000420770" description="Adipokinetic hormone" evidence="3">
    <location>
        <begin position="1"/>
        <end position="8"/>
    </location>
</feature>
<feature type="modified residue" description="Pyrrolidone carboxylic acid" evidence="3">
    <location>
        <position position="1"/>
    </location>
</feature>
<feature type="modified residue" description="Tryptophan amide" evidence="3">
    <location>
        <position position="8"/>
    </location>
</feature>
<proteinExistence type="evidence at protein level"/>
<reference evidence="5" key="1">
    <citation type="journal article" date="2012" name="Syst. Biol.">
        <title>Peptidomics-based phylogeny and biogeography of Mantophasmatodea (Hexapoda).</title>
        <authorList>
            <person name="Predel R."/>
            <person name="Neupert S."/>
            <person name="Huetteroth W."/>
            <person name="Kahnt J."/>
            <person name="Waidelich D."/>
            <person name="Roth S."/>
        </authorList>
    </citation>
    <scope>PROTEIN SEQUENCE</scope>
    <scope>PYROGLUTAMATE FORMATION AT GLN-1</scope>
    <scope>AMIDATION AT TRP-8</scope>
    <source>
        <tissue evidence="3">Corpora cardiaca</tissue>
    </source>
</reference>
<evidence type="ECO:0000250" key="1"/>
<evidence type="ECO:0000255" key="2"/>
<evidence type="ECO:0000269" key="3">
    <source>
    </source>
</evidence>
<evidence type="ECO:0000303" key="4">
    <source>
    </source>
</evidence>
<evidence type="ECO:0000305" key="5"/>
<evidence type="ECO:0000305" key="6">
    <source>
    </source>
</evidence>
<protein>
    <recommendedName>
        <fullName evidence="4">Adipokinetic hormone</fullName>
        <shortName evidence="4">AKH</shortName>
    </recommendedName>
</protein>
<accession>B0M3E1</accession>
<sequence length="8" mass="934">QVNFSPGW</sequence>
<name>AKH_MANKU</name>
<organism>
    <name type="scientific">Mantophasma kudubergense</name>
    <name type="common">Gladiator</name>
    <name type="synonym">Heel-walker</name>
    <dbReference type="NCBI Taxonomy" id="1037657"/>
    <lineage>
        <taxon>Eukaryota</taxon>
        <taxon>Metazoa</taxon>
        <taxon>Ecdysozoa</taxon>
        <taxon>Arthropoda</taxon>
        <taxon>Hexapoda</taxon>
        <taxon>Insecta</taxon>
        <taxon>Pterygota</taxon>
        <taxon>Neoptera</taxon>
        <taxon>Polyneoptera</taxon>
        <taxon>Mantophasmatodea</taxon>
        <taxon>Mantophasmatidae</taxon>
        <taxon>Mantophasma</taxon>
    </lineage>
</organism>
<comment type="function">
    <text evidence="1">This hormone, released from cells in the corpora cardiaca, causes release of diglycerides from the fat body and stimulation of muscles to use these diglycerides as an energy source during energy-demanding processes.</text>
</comment>
<comment type="subcellular location">
    <subcellularLocation>
        <location evidence="6">Secreted</location>
    </subcellularLocation>
</comment>
<comment type="similarity">
    <text evidence="2">Belongs to the AKH/HRTH/RPCH family.</text>
</comment>